<name>YACG_IDILO</name>
<proteinExistence type="inferred from homology"/>
<accession>Q5R0N5</accession>
<organism>
    <name type="scientific">Idiomarina loihiensis (strain ATCC BAA-735 / DSM 15497 / L2-TR)</name>
    <dbReference type="NCBI Taxonomy" id="283942"/>
    <lineage>
        <taxon>Bacteria</taxon>
        <taxon>Pseudomonadati</taxon>
        <taxon>Pseudomonadota</taxon>
        <taxon>Gammaproteobacteria</taxon>
        <taxon>Alteromonadales</taxon>
        <taxon>Idiomarinaceae</taxon>
        <taxon>Idiomarina</taxon>
    </lineage>
</organism>
<keyword id="KW-0479">Metal-binding</keyword>
<keyword id="KW-1185">Reference proteome</keyword>
<keyword id="KW-0862">Zinc</keyword>
<reference key="1">
    <citation type="journal article" date="2004" name="Proc. Natl. Acad. Sci. U.S.A.">
        <title>Genome sequence of the deep-sea gamma-proteobacterium Idiomarina loihiensis reveals amino acid fermentation as a source of carbon and energy.</title>
        <authorList>
            <person name="Hou S."/>
            <person name="Saw J.H."/>
            <person name="Lee K.S."/>
            <person name="Freitas T.A."/>
            <person name="Belisle C."/>
            <person name="Kawarabayasi Y."/>
            <person name="Donachie S.P."/>
            <person name="Pikina A."/>
            <person name="Galperin M.Y."/>
            <person name="Koonin E.V."/>
            <person name="Makarova K.S."/>
            <person name="Omelchenko M.V."/>
            <person name="Sorokin A."/>
            <person name="Wolf Y.I."/>
            <person name="Li Q.X."/>
            <person name="Keum Y.S."/>
            <person name="Campbell S."/>
            <person name="Denery J."/>
            <person name="Aizawa S."/>
            <person name="Shibata S."/>
            <person name="Malahoff A."/>
            <person name="Alam M."/>
        </authorList>
    </citation>
    <scope>NUCLEOTIDE SEQUENCE [LARGE SCALE GENOMIC DNA]</scope>
    <source>
        <strain>ATCC BAA-735 / DSM 15497 / L2-TR</strain>
    </source>
</reference>
<protein>
    <recommendedName>
        <fullName evidence="1">DNA gyrase inhibitor YacG</fullName>
    </recommendedName>
</protein>
<feature type="chain" id="PRO_0000211702" description="DNA gyrase inhibitor YacG">
    <location>
        <begin position="1"/>
        <end position="64"/>
    </location>
</feature>
<feature type="region of interest" description="Disordered" evidence="2">
    <location>
        <begin position="44"/>
        <end position="64"/>
    </location>
</feature>
<feature type="binding site" evidence="1">
    <location>
        <position position="7"/>
    </location>
    <ligand>
        <name>Zn(2+)</name>
        <dbReference type="ChEBI" id="CHEBI:29105"/>
    </ligand>
</feature>
<feature type="binding site" evidence="1">
    <location>
        <position position="10"/>
    </location>
    <ligand>
        <name>Zn(2+)</name>
        <dbReference type="ChEBI" id="CHEBI:29105"/>
    </ligand>
</feature>
<feature type="binding site" evidence="1">
    <location>
        <position position="26"/>
    </location>
    <ligand>
        <name>Zn(2+)</name>
        <dbReference type="ChEBI" id="CHEBI:29105"/>
    </ligand>
</feature>
<feature type="binding site" evidence="1">
    <location>
        <position position="30"/>
    </location>
    <ligand>
        <name>Zn(2+)</name>
        <dbReference type="ChEBI" id="CHEBI:29105"/>
    </ligand>
</feature>
<evidence type="ECO:0000255" key="1">
    <source>
        <dbReference type="HAMAP-Rule" id="MF_00649"/>
    </source>
</evidence>
<evidence type="ECO:0000256" key="2">
    <source>
        <dbReference type="SAM" id="MobiDB-lite"/>
    </source>
</evidence>
<sequence length="64" mass="7254">MSISVNCPTCQTKVEWSEKSPARPFCSERCKLIDLGEWANEEKSIPGEPVVIANDDYNNEESDY</sequence>
<comment type="function">
    <text evidence="1">Inhibits all the catalytic activities of DNA gyrase by preventing its interaction with DNA. Acts by binding directly to the C-terminal domain of GyrB, which probably disrupts DNA binding by the gyrase.</text>
</comment>
<comment type="cofactor">
    <cofactor evidence="1">
        <name>Zn(2+)</name>
        <dbReference type="ChEBI" id="CHEBI:29105"/>
    </cofactor>
    <text evidence="1">Binds 1 zinc ion.</text>
</comment>
<comment type="subunit">
    <text evidence="1">Interacts with GyrB.</text>
</comment>
<comment type="similarity">
    <text evidence="1">Belongs to the DNA gyrase inhibitor YacG family.</text>
</comment>
<dbReference type="EMBL" id="AE017340">
    <property type="protein sequence ID" value="AAV81290.1"/>
    <property type="molecule type" value="Genomic_DNA"/>
</dbReference>
<dbReference type="RefSeq" id="WP_011233708.1">
    <property type="nucleotide sequence ID" value="NC_006512.1"/>
</dbReference>
<dbReference type="SMR" id="Q5R0N5"/>
<dbReference type="STRING" id="283942.IL0447"/>
<dbReference type="GeneID" id="41335599"/>
<dbReference type="KEGG" id="ilo:IL0447"/>
<dbReference type="eggNOG" id="COG3024">
    <property type="taxonomic scope" value="Bacteria"/>
</dbReference>
<dbReference type="HOGENOM" id="CLU_178280_3_1_6"/>
<dbReference type="OrthoDB" id="9809663at2"/>
<dbReference type="Proteomes" id="UP000001171">
    <property type="component" value="Chromosome"/>
</dbReference>
<dbReference type="GO" id="GO:0008657">
    <property type="term" value="F:DNA topoisomerase type II (double strand cut, ATP-hydrolyzing) inhibitor activity"/>
    <property type="evidence" value="ECO:0007669"/>
    <property type="project" value="UniProtKB-UniRule"/>
</dbReference>
<dbReference type="GO" id="GO:0008270">
    <property type="term" value="F:zinc ion binding"/>
    <property type="evidence" value="ECO:0007669"/>
    <property type="project" value="UniProtKB-UniRule"/>
</dbReference>
<dbReference type="GO" id="GO:0006355">
    <property type="term" value="P:regulation of DNA-templated transcription"/>
    <property type="evidence" value="ECO:0007669"/>
    <property type="project" value="InterPro"/>
</dbReference>
<dbReference type="Gene3D" id="3.30.50.10">
    <property type="entry name" value="Erythroid Transcription Factor GATA-1, subunit A"/>
    <property type="match status" value="1"/>
</dbReference>
<dbReference type="HAMAP" id="MF_00649">
    <property type="entry name" value="DNA_gyrase_inhibitor_YacG"/>
    <property type="match status" value="1"/>
</dbReference>
<dbReference type="InterPro" id="IPR005584">
    <property type="entry name" value="DNA_gyrase_inhibitor_YacG"/>
</dbReference>
<dbReference type="InterPro" id="IPR013088">
    <property type="entry name" value="Znf_NHR/GATA"/>
</dbReference>
<dbReference type="NCBIfam" id="NF001638">
    <property type="entry name" value="PRK00418.1"/>
    <property type="match status" value="1"/>
</dbReference>
<dbReference type="PANTHER" id="PTHR36150">
    <property type="entry name" value="DNA GYRASE INHIBITOR YACG"/>
    <property type="match status" value="1"/>
</dbReference>
<dbReference type="PANTHER" id="PTHR36150:SF1">
    <property type="entry name" value="DNA GYRASE INHIBITOR YACG"/>
    <property type="match status" value="1"/>
</dbReference>
<dbReference type="Pfam" id="PF03884">
    <property type="entry name" value="YacG"/>
    <property type="match status" value="1"/>
</dbReference>
<dbReference type="SUPFAM" id="SSF57716">
    <property type="entry name" value="Glucocorticoid receptor-like (DNA-binding domain)"/>
    <property type="match status" value="1"/>
</dbReference>
<gene>
    <name evidence="1" type="primary">yacG</name>
    <name type="ordered locus">IL0447</name>
</gene>